<gene>
    <name evidence="4" type="ordered locus">At3g45090</name>
    <name evidence="5" type="ORF">T14D3.30</name>
</gene>
<protein>
    <recommendedName>
        <fullName evidence="3">P-loop NTPase domain-containing protein LPA1 homolog 2</fullName>
    </recommendedName>
    <alternativeName>
        <fullName evidence="3">Protein LOW PHYTIC ACID 1 homolog 2</fullName>
    </alternativeName>
</protein>
<evidence type="ECO:0000256" key="1">
    <source>
        <dbReference type="SAM" id="MobiDB-lite"/>
    </source>
</evidence>
<evidence type="ECO:0000269" key="2">
    <source>
    </source>
</evidence>
<evidence type="ECO:0000305" key="3"/>
<evidence type="ECO:0000312" key="4">
    <source>
        <dbReference type="Araport" id="AT3G45090"/>
    </source>
</evidence>
<evidence type="ECO:0000312" key="5">
    <source>
        <dbReference type="EMBL" id="CAB72147.1"/>
    </source>
</evidence>
<proteinExistence type="evidence at transcript level"/>
<comment type="function">
    <text evidence="2">May be not required for the accumulation of phytic acid in seeds. Phytic acid is the primary storage form of phosphorus in cereal grains and other plant seeds.</text>
</comment>
<comment type="alternative products">
    <event type="alternative splicing"/>
    <isoform>
        <id>Q93ZS1-1</id>
        <name>1</name>
        <sequence type="displayed"/>
    </isoform>
    <text>A number of isoforms are produced. According to EST sequences.</text>
</comment>
<comment type="disruption phenotype">
    <text evidence="2">No visible phenotype under normal growth conditions and normal levels of phytic acid in seeds.</text>
</comment>
<comment type="sequence caution" evidence="3">
    <conflict type="erroneous initiation">
        <sequence resource="EMBL-CDS" id="CAB72147"/>
    </conflict>
    <text>Truncated N-terminus.</text>
</comment>
<dbReference type="EMBL" id="AL138649">
    <property type="protein sequence ID" value="CAB72147.1"/>
    <property type="status" value="ALT_INIT"/>
    <property type="molecule type" value="Genomic_DNA"/>
</dbReference>
<dbReference type="EMBL" id="CP002686">
    <property type="protein sequence ID" value="AEE77991.1"/>
    <property type="molecule type" value="Genomic_DNA"/>
</dbReference>
<dbReference type="EMBL" id="AY056298">
    <property type="protein sequence ID" value="AAL07147.1"/>
    <property type="molecule type" value="mRNA"/>
</dbReference>
<dbReference type="EMBL" id="AY096678">
    <property type="protein sequence ID" value="AAM20312.1"/>
    <property type="molecule type" value="mRNA"/>
</dbReference>
<dbReference type="PIR" id="T47449">
    <property type="entry name" value="T47449"/>
</dbReference>
<dbReference type="RefSeq" id="NP_566873.1">
    <molecule id="Q93ZS1-1"/>
    <property type="nucleotide sequence ID" value="NM_114378.3"/>
</dbReference>
<dbReference type="FunCoup" id="Q93ZS1">
    <property type="interactions" value="280"/>
</dbReference>
<dbReference type="STRING" id="3702.Q93ZS1"/>
<dbReference type="iPTMnet" id="Q93ZS1"/>
<dbReference type="PaxDb" id="3702-AT3G45090.1"/>
<dbReference type="ProteomicsDB" id="238727">
    <molecule id="Q93ZS1-1"/>
</dbReference>
<dbReference type="EnsemblPlants" id="AT3G45090.1">
    <molecule id="Q93ZS1-1"/>
    <property type="protein sequence ID" value="AT3G45090.1"/>
    <property type="gene ID" value="AT3G45090"/>
</dbReference>
<dbReference type="GeneID" id="823644"/>
<dbReference type="Gramene" id="AT3G45090.1">
    <molecule id="Q93ZS1-1"/>
    <property type="protein sequence ID" value="AT3G45090.1"/>
    <property type="gene ID" value="AT3G45090"/>
</dbReference>
<dbReference type="KEGG" id="ath:AT3G45090"/>
<dbReference type="Araport" id="AT3G45090"/>
<dbReference type="TAIR" id="AT3G45090"/>
<dbReference type="eggNOG" id="ENOG502QR37">
    <property type="taxonomic scope" value="Eukaryota"/>
</dbReference>
<dbReference type="HOGENOM" id="CLU_014708_0_1_1"/>
<dbReference type="InParanoid" id="Q93ZS1"/>
<dbReference type="OMA" id="IMGCKAR"/>
<dbReference type="PhylomeDB" id="Q93ZS1"/>
<dbReference type="PRO" id="PR:Q93ZS1"/>
<dbReference type="Proteomes" id="UP000006548">
    <property type="component" value="Chromosome 3"/>
</dbReference>
<dbReference type="ExpressionAtlas" id="Q93ZS1">
    <property type="expression patterns" value="baseline and differential"/>
</dbReference>
<dbReference type="Gene3D" id="3.40.50.300">
    <property type="entry name" value="P-loop containing nucleotide triphosphate hydrolases"/>
    <property type="match status" value="1"/>
</dbReference>
<dbReference type="InterPro" id="IPR027417">
    <property type="entry name" value="P-loop_NTPase"/>
</dbReference>
<dbReference type="PANTHER" id="PTHR33477">
    <property type="entry name" value="P-LOOP NTPASE DOMAIN-CONTAINING PROTEIN LPA1 HOMOLOG 1"/>
    <property type="match status" value="1"/>
</dbReference>
<dbReference type="PANTHER" id="PTHR33477:SF8">
    <property type="entry name" value="P-LOOP NTPASE DOMAIN-CONTAINING PROTEIN LPA1 HOMOLOG 2"/>
    <property type="match status" value="1"/>
</dbReference>
<dbReference type="SUPFAM" id="SSF52540">
    <property type="entry name" value="P-loop containing nucleoside triphosphate hydrolases"/>
    <property type="match status" value="1"/>
</dbReference>
<keyword id="KW-0025">Alternative splicing</keyword>
<keyword id="KW-1185">Reference proteome</keyword>
<reference key="1">
    <citation type="journal article" date="2000" name="Nature">
        <title>Sequence and analysis of chromosome 3 of the plant Arabidopsis thaliana.</title>
        <authorList>
            <person name="Salanoubat M."/>
            <person name="Lemcke K."/>
            <person name="Rieger M."/>
            <person name="Ansorge W."/>
            <person name="Unseld M."/>
            <person name="Fartmann B."/>
            <person name="Valle G."/>
            <person name="Bloecker H."/>
            <person name="Perez-Alonso M."/>
            <person name="Obermaier B."/>
            <person name="Delseny M."/>
            <person name="Boutry M."/>
            <person name="Grivell L.A."/>
            <person name="Mache R."/>
            <person name="Puigdomenech P."/>
            <person name="De Simone V."/>
            <person name="Choisne N."/>
            <person name="Artiguenave F."/>
            <person name="Robert C."/>
            <person name="Brottier P."/>
            <person name="Wincker P."/>
            <person name="Cattolico L."/>
            <person name="Weissenbach J."/>
            <person name="Saurin W."/>
            <person name="Quetier F."/>
            <person name="Schaefer M."/>
            <person name="Mueller-Auer S."/>
            <person name="Gabel C."/>
            <person name="Fuchs M."/>
            <person name="Benes V."/>
            <person name="Wurmbach E."/>
            <person name="Drzonek H."/>
            <person name="Erfle H."/>
            <person name="Jordan N."/>
            <person name="Bangert S."/>
            <person name="Wiedelmann R."/>
            <person name="Kranz H."/>
            <person name="Voss H."/>
            <person name="Holland R."/>
            <person name="Brandt P."/>
            <person name="Nyakatura G."/>
            <person name="Vezzi A."/>
            <person name="D'Angelo M."/>
            <person name="Pallavicini A."/>
            <person name="Toppo S."/>
            <person name="Simionati B."/>
            <person name="Conrad A."/>
            <person name="Hornischer K."/>
            <person name="Kauer G."/>
            <person name="Loehnert T.-H."/>
            <person name="Nordsiek G."/>
            <person name="Reichelt J."/>
            <person name="Scharfe M."/>
            <person name="Schoen O."/>
            <person name="Bargues M."/>
            <person name="Terol J."/>
            <person name="Climent J."/>
            <person name="Navarro P."/>
            <person name="Collado C."/>
            <person name="Perez-Perez A."/>
            <person name="Ottenwaelder B."/>
            <person name="Duchemin D."/>
            <person name="Cooke R."/>
            <person name="Laudie M."/>
            <person name="Berger-Llauro C."/>
            <person name="Purnelle B."/>
            <person name="Masuy D."/>
            <person name="de Haan M."/>
            <person name="Maarse A.C."/>
            <person name="Alcaraz J.-P."/>
            <person name="Cottet A."/>
            <person name="Casacuberta E."/>
            <person name="Monfort A."/>
            <person name="Argiriou A."/>
            <person name="Flores M."/>
            <person name="Liguori R."/>
            <person name="Vitale D."/>
            <person name="Mannhaupt G."/>
            <person name="Haase D."/>
            <person name="Schoof H."/>
            <person name="Rudd S."/>
            <person name="Zaccaria P."/>
            <person name="Mewes H.-W."/>
            <person name="Mayer K.F.X."/>
            <person name="Kaul S."/>
            <person name="Town C.D."/>
            <person name="Koo H.L."/>
            <person name="Tallon L.J."/>
            <person name="Jenkins J."/>
            <person name="Rooney T."/>
            <person name="Rizzo M."/>
            <person name="Walts A."/>
            <person name="Utterback T."/>
            <person name="Fujii C.Y."/>
            <person name="Shea T.P."/>
            <person name="Creasy T.H."/>
            <person name="Haas B."/>
            <person name="Maiti R."/>
            <person name="Wu D."/>
            <person name="Peterson J."/>
            <person name="Van Aken S."/>
            <person name="Pai G."/>
            <person name="Militscher J."/>
            <person name="Sellers P."/>
            <person name="Gill J.E."/>
            <person name="Feldblyum T.V."/>
            <person name="Preuss D."/>
            <person name="Lin X."/>
            <person name="Nierman W.C."/>
            <person name="Salzberg S.L."/>
            <person name="White O."/>
            <person name="Venter J.C."/>
            <person name="Fraser C.M."/>
            <person name="Kaneko T."/>
            <person name="Nakamura Y."/>
            <person name="Sato S."/>
            <person name="Kato T."/>
            <person name="Asamizu E."/>
            <person name="Sasamoto S."/>
            <person name="Kimura T."/>
            <person name="Idesawa K."/>
            <person name="Kawashima K."/>
            <person name="Kishida Y."/>
            <person name="Kiyokawa C."/>
            <person name="Kohara M."/>
            <person name="Matsumoto M."/>
            <person name="Matsuno A."/>
            <person name="Muraki A."/>
            <person name="Nakayama S."/>
            <person name="Nakazaki N."/>
            <person name="Shinpo S."/>
            <person name="Takeuchi C."/>
            <person name="Wada T."/>
            <person name="Watanabe A."/>
            <person name="Yamada M."/>
            <person name="Yasuda M."/>
            <person name="Tabata S."/>
        </authorList>
    </citation>
    <scope>NUCLEOTIDE SEQUENCE [LARGE SCALE GENOMIC DNA]</scope>
    <source>
        <strain>cv. Columbia</strain>
    </source>
</reference>
<reference key="2">
    <citation type="journal article" date="2017" name="Plant J.">
        <title>Araport11: a complete reannotation of the Arabidopsis thaliana reference genome.</title>
        <authorList>
            <person name="Cheng C.Y."/>
            <person name="Krishnakumar V."/>
            <person name="Chan A.P."/>
            <person name="Thibaud-Nissen F."/>
            <person name="Schobel S."/>
            <person name="Town C.D."/>
        </authorList>
    </citation>
    <scope>GENOME REANNOTATION</scope>
    <source>
        <strain>cv. Columbia</strain>
    </source>
</reference>
<reference key="3">
    <citation type="journal article" date="2003" name="Science">
        <title>Empirical analysis of transcriptional activity in the Arabidopsis genome.</title>
        <authorList>
            <person name="Yamada K."/>
            <person name="Lim J."/>
            <person name="Dale J.M."/>
            <person name="Chen H."/>
            <person name="Shinn P."/>
            <person name="Palm C.J."/>
            <person name="Southwick A.M."/>
            <person name="Wu H.C."/>
            <person name="Kim C.J."/>
            <person name="Nguyen M."/>
            <person name="Pham P.K."/>
            <person name="Cheuk R.F."/>
            <person name="Karlin-Newmann G."/>
            <person name="Liu S.X."/>
            <person name="Lam B."/>
            <person name="Sakano H."/>
            <person name="Wu T."/>
            <person name="Yu G."/>
            <person name="Miranda M."/>
            <person name="Quach H.L."/>
            <person name="Tripp M."/>
            <person name="Chang C.H."/>
            <person name="Lee J.M."/>
            <person name="Toriumi M.J."/>
            <person name="Chan M.M."/>
            <person name="Tang C.C."/>
            <person name="Onodera C.S."/>
            <person name="Deng J.M."/>
            <person name="Akiyama K."/>
            <person name="Ansari Y."/>
            <person name="Arakawa T."/>
            <person name="Banh J."/>
            <person name="Banno F."/>
            <person name="Bowser L."/>
            <person name="Brooks S.Y."/>
            <person name="Carninci P."/>
            <person name="Chao Q."/>
            <person name="Choy N."/>
            <person name="Enju A."/>
            <person name="Goldsmith A.D."/>
            <person name="Gurjal M."/>
            <person name="Hansen N.F."/>
            <person name="Hayashizaki Y."/>
            <person name="Johnson-Hopson C."/>
            <person name="Hsuan V.W."/>
            <person name="Iida K."/>
            <person name="Karnes M."/>
            <person name="Khan S."/>
            <person name="Koesema E."/>
            <person name="Ishida J."/>
            <person name="Jiang P.X."/>
            <person name="Jones T."/>
            <person name="Kawai J."/>
            <person name="Kamiya A."/>
            <person name="Meyers C."/>
            <person name="Nakajima M."/>
            <person name="Narusaka M."/>
            <person name="Seki M."/>
            <person name="Sakurai T."/>
            <person name="Satou M."/>
            <person name="Tamse R."/>
            <person name="Vaysberg M."/>
            <person name="Wallender E.K."/>
            <person name="Wong C."/>
            <person name="Yamamura Y."/>
            <person name="Yuan S."/>
            <person name="Shinozaki K."/>
            <person name="Davis R.W."/>
            <person name="Theologis A."/>
            <person name="Ecker J.R."/>
        </authorList>
    </citation>
    <scope>NUCLEOTIDE SEQUENCE [LARGE SCALE MRNA]</scope>
    <source>
        <strain>cv. Columbia</strain>
    </source>
</reference>
<reference key="4">
    <citation type="journal article" date="2010" name="Planta">
        <title>Genetic analysis of two OsLpa1-like genes in Arabidopsis reveals that only one is required for wild-type seed phytic acid levels.</title>
        <authorList>
            <person name="Kim S.I."/>
            <person name="Tai T.H."/>
        </authorList>
    </citation>
    <scope>FUNCTION</scope>
    <scope>DISRUPTION PHENOTYPE</scope>
</reference>
<feature type="chain" id="PRO_0000431863" description="P-loop NTPase domain-containing protein LPA1 homolog 2">
    <location>
        <begin position="1"/>
        <end position="717"/>
    </location>
</feature>
<feature type="region of interest" description="Disordered" evidence="1">
    <location>
        <begin position="235"/>
        <end position="259"/>
    </location>
</feature>
<feature type="region of interest" description="Disordered" evidence="1">
    <location>
        <begin position="532"/>
        <end position="629"/>
    </location>
</feature>
<feature type="compositionally biased region" description="Polar residues" evidence="1">
    <location>
        <begin position="243"/>
        <end position="259"/>
    </location>
</feature>
<feature type="compositionally biased region" description="Polar residues" evidence="1">
    <location>
        <begin position="532"/>
        <end position="545"/>
    </location>
</feature>
<feature type="compositionally biased region" description="Acidic residues" evidence="1">
    <location>
        <begin position="559"/>
        <end position="582"/>
    </location>
</feature>
<feature type="compositionally biased region" description="Basic and acidic residues" evidence="1">
    <location>
        <begin position="583"/>
        <end position="602"/>
    </location>
</feature>
<accession>Q93ZS1</accession>
<accession>Q9M1V0</accession>
<name>LPAH2_ARATH</name>
<sequence length="717" mass="80249">MMTEATKVLYIVVREEGDDDDNNGDDSFRYTRPVLQSTLQLMGCKARHAFKISRRVFELIRSEGSCNTSPENGKEPEFAKEVGGSTCVEKLNCLVVAGDVDKNKSKPFEMYKRRTTVVVSREIFVDVVCDALAEYKYVGRDQRADLILACRIRERKESVTVLLCGTSGCGKSTLSALLGSRLGITTVVSTDSIRHMMRSFADEKQNPLLWASTYHAGEYLDPVAVAESKAKRKAKKLKGSRGVNSNAQKTDAGSNSSTTELLSHKQMAIEGYKAQSEMVIDSLDRLITTWEERNESVVVEGVHLSLNFVMGLMKKHPSIVPFMVYIANEEKHLERFAVRAKYMTLDPAKNKYVKYIRNIRTIQDYLCKRADKHLVPKINNTNVDKSVATIHATVFGCLRRRETGEKLYDTTTNTVSVIDDEHRNQCAANSLTSKGMFQVIQRQGSSRRFMALCNTDGTVAKTWPVASVGKIRKPVVNTEMDDGTEHQLHKAEPVNLQFGHFGISAWPSDGATSHAGSVDDLRADIIETGSRHYSSCCSSPRTSDGPSKELMEEQSVNGSDEDDEEGDDDFHEPDSDEDLSDNNDERNRDEIGSVDEESTKSDEEYDDLAMEDKSYWTDNEEEESRDTISMVSQNNHNEASKTNKDDKYSQNLDLFLKTTNQPLTESLELTSEYRNRMGVAASDKAKMRKRSLSIPPVGKHGSIIDDQILANQTDSVL</sequence>
<organism>
    <name type="scientific">Arabidopsis thaliana</name>
    <name type="common">Mouse-ear cress</name>
    <dbReference type="NCBI Taxonomy" id="3702"/>
    <lineage>
        <taxon>Eukaryota</taxon>
        <taxon>Viridiplantae</taxon>
        <taxon>Streptophyta</taxon>
        <taxon>Embryophyta</taxon>
        <taxon>Tracheophyta</taxon>
        <taxon>Spermatophyta</taxon>
        <taxon>Magnoliopsida</taxon>
        <taxon>eudicotyledons</taxon>
        <taxon>Gunneridae</taxon>
        <taxon>Pentapetalae</taxon>
        <taxon>rosids</taxon>
        <taxon>malvids</taxon>
        <taxon>Brassicales</taxon>
        <taxon>Brassicaceae</taxon>
        <taxon>Camelineae</taxon>
        <taxon>Arabidopsis</taxon>
    </lineage>
</organism>